<comment type="function">
    <text evidence="1">Catalyzes the phosphorylation of D-glycero-D-manno-heptose 7-phosphate at the C-1 position to selectively form D-glycero-beta-D-manno-heptose-1,7-bisphosphate.</text>
</comment>
<comment type="function">
    <text evidence="1">Catalyzes the ADP transfer from ATP to D-glycero-beta-D-manno-heptose 1-phosphate, yielding ADP-D-glycero-beta-D-manno-heptose.</text>
</comment>
<comment type="catalytic activity">
    <reaction evidence="1">
        <text>D-glycero-beta-D-manno-heptose 7-phosphate + ATP = D-glycero-beta-D-manno-heptose 1,7-bisphosphate + ADP + H(+)</text>
        <dbReference type="Rhea" id="RHEA:27473"/>
        <dbReference type="ChEBI" id="CHEBI:15378"/>
        <dbReference type="ChEBI" id="CHEBI:30616"/>
        <dbReference type="ChEBI" id="CHEBI:60204"/>
        <dbReference type="ChEBI" id="CHEBI:60208"/>
        <dbReference type="ChEBI" id="CHEBI:456216"/>
        <dbReference type="EC" id="2.7.1.167"/>
    </reaction>
</comment>
<comment type="catalytic activity">
    <reaction evidence="1">
        <text>D-glycero-beta-D-manno-heptose 1-phosphate + ATP + H(+) = ADP-D-glycero-beta-D-manno-heptose + diphosphate</text>
        <dbReference type="Rhea" id="RHEA:27465"/>
        <dbReference type="ChEBI" id="CHEBI:15378"/>
        <dbReference type="ChEBI" id="CHEBI:30616"/>
        <dbReference type="ChEBI" id="CHEBI:33019"/>
        <dbReference type="ChEBI" id="CHEBI:59967"/>
        <dbReference type="ChEBI" id="CHEBI:61593"/>
        <dbReference type="EC" id="2.7.7.70"/>
    </reaction>
</comment>
<comment type="pathway">
    <text evidence="1">Nucleotide-sugar biosynthesis; ADP-L-glycero-beta-D-manno-heptose biosynthesis; ADP-L-glycero-beta-D-manno-heptose from D-glycero-beta-D-manno-heptose 7-phosphate: step 1/4.</text>
</comment>
<comment type="pathway">
    <text evidence="1">Nucleotide-sugar biosynthesis; ADP-L-glycero-beta-D-manno-heptose biosynthesis; ADP-L-glycero-beta-D-manno-heptose from D-glycero-beta-D-manno-heptose 7-phosphate: step 3/4.</text>
</comment>
<comment type="subunit">
    <text evidence="1">Homodimer.</text>
</comment>
<comment type="similarity">
    <text evidence="1">In the N-terminal section; belongs to the carbohydrate kinase PfkB family.</text>
</comment>
<comment type="similarity">
    <text evidence="1">In the C-terminal section; belongs to the cytidylyltransferase family.</text>
</comment>
<protein>
    <recommendedName>
        <fullName evidence="1">Bifunctional protein HldE</fullName>
    </recommendedName>
    <domain>
        <recommendedName>
            <fullName evidence="1">D-beta-D-heptose 7-phosphate kinase</fullName>
            <ecNumber evidence="1">2.7.1.167</ecNumber>
        </recommendedName>
        <alternativeName>
            <fullName evidence="1">D-beta-D-heptose 7-phosphotransferase</fullName>
        </alternativeName>
        <alternativeName>
            <fullName evidence="1">D-glycero-beta-D-manno-heptose-7-phosphate kinase</fullName>
        </alternativeName>
    </domain>
    <domain>
        <recommendedName>
            <fullName evidence="1">D-beta-D-heptose 1-phosphate adenylyltransferase</fullName>
            <ecNumber evidence="1">2.7.7.70</ecNumber>
        </recommendedName>
        <alternativeName>
            <fullName evidence="1">D-glycero-beta-D-manno-heptose 1-phosphate adenylyltransferase</fullName>
        </alternativeName>
    </domain>
</protein>
<gene>
    <name evidence="1" type="primary">hldE</name>
    <name type="ordered locus">ABO_2290</name>
</gene>
<reference key="1">
    <citation type="journal article" date="2006" name="Nat. Biotechnol.">
        <title>Genome sequence of the ubiquitous hydrocarbon-degrading marine bacterium Alcanivorax borkumensis.</title>
        <authorList>
            <person name="Schneiker S."/>
            <person name="Martins dos Santos V.A.P."/>
            <person name="Bartels D."/>
            <person name="Bekel T."/>
            <person name="Brecht M."/>
            <person name="Buhrmester J."/>
            <person name="Chernikova T.N."/>
            <person name="Denaro R."/>
            <person name="Ferrer M."/>
            <person name="Gertler C."/>
            <person name="Goesmann A."/>
            <person name="Golyshina O.V."/>
            <person name="Kaminski F."/>
            <person name="Khachane A.N."/>
            <person name="Lang S."/>
            <person name="Linke B."/>
            <person name="McHardy A.C."/>
            <person name="Meyer F."/>
            <person name="Nechitaylo T."/>
            <person name="Puehler A."/>
            <person name="Regenhardt D."/>
            <person name="Rupp O."/>
            <person name="Sabirova J.S."/>
            <person name="Selbitschka W."/>
            <person name="Yakimov M.M."/>
            <person name="Timmis K.N."/>
            <person name="Vorhoelter F.-J."/>
            <person name="Weidner S."/>
            <person name="Kaiser O."/>
            <person name="Golyshin P.N."/>
        </authorList>
    </citation>
    <scope>NUCLEOTIDE SEQUENCE [LARGE SCALE GENOMIC DNA]</scope>
    <source>
        <strain>ATCC 700651 / DSM 11573 / NCIMB 13689 / SK2</strain>
    </source>
</reference>
<sequence>MQNPHIPSFAQARVLVAGDVMLDRYWHGPTSRISPEAPVPVVRVTELEDRPGGAANVALNMAALGARAELVGVTGRDEAASILEERLAAAEVGCHFQKVDGLPTITKLRVISRQQQLLRLDFEEAFHSQDPAPFAEQVKQQLVHCGALVLSDYAKGALRDCPGLIALAREAGVPVLVDPKGTDFEPYRGATLLTPNLSEFEAVVGVVKDEQDLIAKGQQLIRDLDLQAMLVTRSEKGMTLLRDGLPELHLPARAREVFDVTGAGDTVISVLAVSLAAGAAMEDAVALANIAAGIVVAKLGTAVVSAPELRRAVHQEGGSGRGVMSEAQLLIAIEDARAQGERIVFTNGCFDIIHAGHVGYLDTARRQGDRLVLAVNGDESIRRLKGPGRPINPLERRMAVLAALEAVDWVVAFDTDTPEPLLESIKPDVLVKGGDYSVDQVVGHEFVKSYGGEVKVLDFIDDISTTKIVERIREKD</sequence>
<dbReference type="EC" id="2.7.1.167" evidence="1"/>
<dbReference type="EC" id="2.7.7.70" evidence="1"/>
<dbReference type="EMBL" id="AM286690">
    <property type="protein sequence ID" value="CAL17738.1"/>
    <property type="molecule type" value="Genomic_DNA"/>
</dbReference>
<dbReference type="RefSeq" id="WP_011589564.1">
    <property type="nucleotide sequence ID" value="NC_008260.1"/>
</dbReference>
<dbReference type="SMR" id="Q0VM60"/>
<dbReference type="STRING" id="393595.ABO_2290"/>
<dbReference type="KEGG" id="abo:ABO_2290"/>
<dbReference type="eggNOG" id="COG0615">
    <property type="taxonomic scope" value="Bacteria"/>
</dbReference>
<dbReference type="eggNOG" id="COG2870">
    <property type="taxonomic scope" value="Bacteria"/>
</dbReference>
<dbReference type="HOGENOM" id="CLU_021150_2_1_6"/>
<dbReference type="OrthoDB" id="9802794at2"/>
<dbReference type="UniPathway" id="UPA00356">
    <property type="reaction ID" value="UER00437"/>
</dbReference>
<dbReference type="UniPathway" id="UPA00356">
    <property type="reaction ID" value="UER00439"/>
</dbReference>
<dbReference type="Proteomes" id="UP000008871">
    <property type="component" value="Chromosome"/>
</dbReference>
<dbReference type="GO" id="GO:0005829">
    <property type="term" value="C:cytosol"/>
    <property type="evidence" value="ECO:0007669"/>
    <property type="project" value="TreeGrafter"/>
</dbReference>
<dbReference type="GO" id="GO:0005524">
    <property type="term" value="F:ATP binding"/>
    <property type="evidence" value="ECO:0007669"/>
    <property type="project" value="UniProtKB-UniRule"/>
</dbReference>
<dbReference type="GO" id="GO:0033785">
    <property type="term" value="F:heptose 7-phosphate kinase activity"/>
    <property type="evidence" value="ECO:0007669"/>
    <property type="project" value="UniProtKB-UniRule"/>
</dbReference>
<dbReference type="GO" id="GO:0033786">
    <property type="term" value="F:heptose-1-phosphate adenylyltransferase activity"/>
    <property type="evidence" value="ECO:0007669"/>
    <property type="project" value="UniProtKB-UniRule"/>
</dbReference>
<dbReference type="GO" id="GO:0016773">
    <property type="term" value="F:phosphotransferase activity, alcohol group as acceptor"/>
    <property type="evidence" value="ECO:0007669"/>
    <property type="project" value="InterPro"/>
</dbReference>
<dbReference type="GO" id="GO:0097171">
    <property type="term" value="P:ADP-L-glycero-beta-D-manno-heptose biosynthetic process"/>
    <property type="evidence" value="ECO:0007669"/>
    <property type="project" value="UniProtKB-UniPathway"/>
</dbReference>
<dbReference type="CDD" id="cd01172">
    <property type="entry name" value="RfaE_like"/>
    <property type="match status" value="1"/>
</dbReference>
<dbReference type="FunFam" id="3.40.1190.20:FF:000002">
    <property type="entry name" value="Bifunctional protein HldE"/>
    <property type="match status" value="1"/>
</dbReference>
<dbReference type="FunFam" id="3.40.50.620:FF:000028">
    <property type="entry name" value="Bifunctional protein HldE"/>
    <property type="match status" value="1"/>
</dbReference>
<dbReference type="Gene3D" id="3.40.1190.20">
    <property type="match status" value="1"/>
</dbReference>
<dbReference type="Gene3D" id="3.40.50.620">
    <property type="entry name" value="HUPs"/>
    <property type="match status" value="1"/>
</dbReference>
<dbReference type="HAMAP" id="MF_01603">
    <property type="entry name" value="HldE"/>
    <property type="match status" value="1"/>
</dbReference>
<dbReference type="InterPro" id="IPR023030">
    <property type="entry name" value="Bifunc_HldE"/>
</dbReference>
<dbReference type="InterPro" id="IPR002173">
    <property type="entry name" value="Carboh/pur_kinase_PfkB_CS"/>
</dbReference>
<dbReference type="InterPro" id="IPR004821">
    <property type="entry name" value="Cyt_trans-like"/>
</dbReference>
<dbReference type="InterPro" id="IPR011611">
    <property type="entry name" value="PfkB_dom"/>
</dbReference>
<dbReference type="InterPro" id="IPR011913">
    <property type="entry name" value="RfaE_dom_I"/>
</dbReference>
<dbReference type="InterPro" id="IPR011914">
    <property type="entry name" value="RfaE_dom_II"/>
</dbReference>
<dbReference type="InterPro" id="IPR029056">
    <property type="entry name" value="Ribokinase-like"/>
</dbReference>
<dbReference type="InterPro" id="IPR014729">
    <property type="entry name" value="Rossmann-like_a/b/a_fold"/>
</dbReference>
<dbReference type="NCBIfam" id="TIGR00125">
    <property type="entry name" value="cyt_tran_rel"/>
    <property type="match status" value="1"/>
</dbReference>
<dbReference type="NCBIfam" id="NF008454">
    <property type="entry name" value="PRK11316.1"/>
    <property type="match status" value="1"/>
</dbReference>
<dbReference type="NCBIfam" id="TIGR02198">
    <property type="entry name" value="rfaE_dom_I"/>
    <property type="match status" value="1"/>
</dbReference>
<dbReference type="NCBIfam" id="TIGR02199">
    <property type="entry name" value="rfaE_dom_II"/>
    <property type="match status" value="1"/>
</dbReference>
<dbReference type="PANTHER" id="PTHR46969">
    <property type="entry name" value="BIFUNCTIONAL PROTEIN HLDE"/>
    <property type="match status" value="1"/>
</dbReference>
<dbReference type="PANTHER" id="PTHR46969:SF1">
    <property type="entry name" value="BIFUNCTIONAL PROTEIN HLDE"/>
    <property type="match status" value="1"/>
</dbReference>
<dbReference type="Pfam" id="PF01467">
    <property type="entry name" value="CTP_transf_like"/>
    <property type="match status" value="1"/>
</dbReference>
<dbReference type="Pfam" id="PF00294">
    <property type="entry name" value="PfkB"/>
    <property type="match status" value="1"/>
</dbReference>
<dbReference type="SUPFAM" id="SSF52374">
    <property type="entry name" value="Nucleotidylyl transferase"/>
    <property type="match status" value="1"/>
</dbReference>
<dbReference type="SUPFAM" id="SSF53613">
    <property type="entry name" value="Ribokinase-like"/>
    <property type="match status" value="1"/>
</dbReference>
<dbReference type="PROSITE" id="PS00583">
    <property type="entry name" value="PFKB_KINASES_1"/>
    <property type="match status" value="1"/>
</dbReference>
<feature type="chain" id="PRO_0000255752" description="Bifunctional protein HldE">
    <location>
        <begin position="1"/>
        <end position="476"/>
    </location>
</feature>
<feature type="region of interest" description="Ribokinase">
    <location>
        <begin position="1"/>
        <end position="320"/>
    </location>
</feature>
<feature type="region of interest" description="Cytidylyltransferase">
    <location>
        <begin position="345"/>
        <end position="476"/>
    </location>
</feature>
<feature type="active site" evidence="1">
    <location>
        <position position="265"/>
    </location>
</feature>
<feature type="binding site" evidence="1">
    <location>
        <begin position="196"/>
        <end position="199"/>
    </location>
    <ligand>
        <name>ATP</name>
        <dbReference type="ChEBI" id="CHEBI:30616"/>
    </ligand>
</feature>
<accession>Q0VM60</accession>
<name>HLDE_ALCBS</name>
<organism>
    <name type="scientific">Alcanivorax borkumensis (strain ATCC 700651 / DSM 11573 / NCIMB 13689 / SK2)</name>
    <dbReference type="NCBI Taxonomy" id="393595"/>
    <lineage>
        <taxon>Bacteria</taxon>
        <taxon>Pseudomonadati</taxon>
        <taxon>Pseudomonadota</taxon>
        <taxon>Gammaproteobacteria</taxon>
        <taxon>Oceanospirillales</taxon>
        <taxon>Alcanivoracaceae</taxon>
        <taxon>Alcanivorax</taxon>
    </lineage>
</organism>
<evidence type="ECO:0000255" key="1">
    <source>
        <dbReference type="HAMAP-Rule" id="MF_01603"/>
    </source>
</evidence>
<keyword id="KW-0067">ATP-binding</keyword>
<keyword id="KW-0119">Carbohydrate metabolism</keyword>
<keyword id="KW-0418">Kinase</keyword>
<keyword id="KW-0511">Multifunctional enzyme</keyword>
<keyword id="KW-0547">Nucleotide-binding</keyword>
<keyword id="KW-0548">Nucleotidyltransferase</keyword>
<keyword id="KW-1185">Reference proteome</keyword>
<keyword id="KW-0808">Transferase</keyword>
<proteinExistence type="inferred from homology"/>